<gene>
    <name evidence="1" type="primary">rplL</name>
    <name type="ordered locus">TGRD_073</name>
</gene>
<protein>
    <recommendedName>
        <fullName evidence="1">Large ribosomal subunit protein bL12</fullName>
    </recommendedName>
    <alternativeName>
        <fullName evidence="2">50S ribosomal protein L7/L12</fullName>
    </alternativeName>
</protein>
<sequence length="125" mass="13010">MAGLSKDQLIESISSMSVIELSELVKALEEKFGVSAAAPAPAVVAGTSPAVATEEKTEFNVILGSVGTSKINVIKVVREVTGLGLKEAKDLVDGAPKTVKENVAKAEAEEIKKKFTEVGATVELK</sequence>
<evidence type="ECO:0000255" key="1">
    <source>
        <dbReference type="HAMAP-Rule" id="MF_00368"/>
    </source>
</evidence>
<evidence type="ECO:0000305" key="2"/>
<comment type="function">
    <text evidence="1">Forms part of the ribosomal stalk which helps the ribosome interact with GTP-bound translation factors. Is thus essential for accurate translation.</text>
</comment>
<comment type="subunit">
    <text evidence="1">Homodimer. Part of the ribosomal stalk of the 50S ribosomal subunit. Forms a multimeric L10(L12)X complex, where L10 forms an elongated spine to which 2 to 4 L12 dimers bind in a sequential fashion. Binds GTP-bound translation factors.</text>
</comment>
<comment type="similarity">
    <text evidence="1">Belongs to the bacterial ribosomal protein bL12 family.</text>
</comment>
<name>RL7_ENDTX</name>
<dbReference type="EMBL" id="AP009510">
    <property type="protein sequence ID" value="BAG13556.1"/>
    <property type="molecule type" value="Genomic_DNA"/>
</dbReference>
<dbReference type="RefSeq" id="WP_015423085.1">
    <property type="nucleotide sequence ID" value="NC_020419.1"/>
</dbReference>
<dbReference type="SMR" id="B1GZ74"/>
<dbReference type="STRING" id="471821.TGRD_073"/>
<dbReference type="KEGG" id="rsd:TGRD_073"/>
<dbReference type="PATRIC" id="fig|471821.5.peg.116"/>
<dbReference type="HOGENOM" id="CLU_086499_3_2_0"/>
<dbReference type="Proteomes" id="UP000001691">
    <property type="component" value="Chromosome"/>
</dbReference>
<dbReference type="GO" id="GO:0022625">
    <property type="term" value="C:cytosolic large ribosomal subunit"/>
    <property type="evidence" value="ECO:0007669"/>
    <property type="project" value="TreeGrafter"/>
</dbReference>
<dbReference type="GO" id="GO:0003729">
    <property type="term" value="F:mRNA binding"/>
    <property type="evidence" value="ECO:0007669"/>
    <property type="project" value="TreeGrafter"/>
</dbReference>
<dbReference type="GO" id="GO:0003735">
    <property type="term" value="F:structural constituent of ribosome"/>
    <property type="evidence" value="ECO:0007669"/>
    <property type="project" value="InterPro"/>
</dbReference>
<dbReference type="GO" id="GO:0006412">
    <property type="term" value="P:translation"/>
    <property type="evidence" value="ECO:0007669"/>
    <property type="project" value="UniProtKB-UniRule"/>
</dbReference>
<dbReference type="CDD" id="cd00387">
    <property type="entry name" value="Ribosomal_L7_L12"/>
    <property type="match status" value="1"/>
</dbReference>
<dbReference type="FunFam" id="3.30.1390.10:FF:000001">
    <property type="entry name" value="50S ribosomal protein L7/L12"/>
    <property type="match status" value="1"/>
</dbReference>
<dbReference type="Gene3D" id="3.30.1390.10">
    <property type="match status" value="1"/>
</dbReference>
<dbReference type="Gene3D" id="1.20.5.710">
    <property type="entry name" value="Single helix bin"/>
    <property type="match status" value="1"/>
</dbReference>
<dbReference type="HAMAP" id="MF_00368">
    <property type="entry name" value="Ribosomal_bL12"/>
    <property type="match status" value="1"/>
</dbReference>
<dbReference type="InterPro" id="IPR000206">
    <property type="entry name" value="Ribosomal_bL12"/>
</dbReference>
<dbReference type="InterPro" id="IPR013823">
    <property type="entry name" value="Ribosomal_bL12_C"/>
</dbReference>
<dbReference type="InterPro" id="IPR014719">
    <property type="entry name" value="Ribosomal_bL12_C/ClpS-like"/>
</dbReference>
<dbReference type="InterPro" id="IPR008932">
    <property type="entry name" value="Ribosomal_bL12_oligo"/>
</dbReference>
<dbReference type="InterPro" id="IPR036235">
    <property type="entry name" value="Ribosomal_bL12_oligo_N_sf"/>
</dbReference>
<dbReference type="NCBIfam" id="TIGR00855">
    <property type="entry name" value="L12"/>
    <property type="match status" value="1"/>
</dbReference>
<dbReference type="PANTHER" id="PTHR45987">
    <property type="entry name" value="39S RIBOSOMAL PROTEIN L12"/>
    <property type="match status" value="1"/>
</dbReference>
<dbReference type="PANTHER" id="PTHR45987:SF4">
    <property type="entry name" value="LARGE RIBOSOMAL SUBUNIT PROTEIN BL12M"/>
    <property type="match status" value="1"/>
</dbReference>
<dbReference type="Pfam" id="PF00542">
    <property type="entry name" value="Ribosomal_L12"/>
    <property type="match status" value="1"/>
</dbReference>
<dbReference type="Pfam" id="PF16320">
    <property type="entry name" value="Ribosomal_L12_N"/>
    <property type="match status" value="1"/>
</dbReference>
<dbReference type="SUPFAM" id="SSF54736">
    <property type="entry name" value="ClpS-like"/>
    <property type="match status" value="1"/>
</dbReference>
<dbReference type="SUPFAM" id="SSF48300">
    <property type="entry name" value="Ribosomal protein L7/12, oligomerisation (N-terminal) domain"/>
    <property type="match status" value="1"/>
</dbReference>
<keyword id="KW-0687">Ribonucleoprotein</keyword>
<keyword id="KW-0689">Ribosomal protein</keyword>
<accession>B1GZ74</accession>
<organism>
    <name type="scientific">Endomicrobium trichonymphae</name>
    <dbReference type="NCBI Taxonomy" id="1408204"/>
    <lineage>
        <taxon>Bacteria</taxon>
        <taxon>Pseudomonadati</taxon>
        <taxon>Elusimicrobiota</taxon>
        <taxon>Endomicrobiia</taxon>
        <taxon>Endomicrobiales</taxon>
        <taxon>Endomicrobiaceae</taxon>
        <taxon>Candidatus Endomicrobiellum</taxon>
    </lineage>
</organism>
<reference key="1">
    <citation type="journal article" date="2008" name="Proc. Natl. Acad. Sci. U.S.A.">
        <title>Complete genome of the uncultured termite group 1 bacteria in a single host protist cell.</title>
        <authorList>
            <person name="Hongoh Y."/>
            <person name="Sharma V.K."/>
            <person name="Prakash T."/>
            <person name="Noda S."/>
            <person name="Taylor T.D."/>
            <person name="Kudo T."/>
            <person name="Sakaki Y."/>
            <person name="Toyoda A."/>
            <person name="Hattori M."/>
            <person name="Ohkuma M."/>
        </authorList>
    </citation>
    <scope>NUCLEOTIDE SEQUENCE [LARGE SCALE GENOMIC DNA]</scope>
</reference>
<proteinExistence type="inferred from homology"/>
<feature type="chain" id="PRO_1000121503" description="Large ribosomal subunit protein bL12">
    <location>
        <begin position="1"/>
        <end position="125"/>
    </location>
</feature>